<protein>
    <recommendedName>
        <fullName evidence="1">Ribosome maturation factor RimM</fullName>
    </recommendedName>
</protein>
<sequence>MNNKTNWVIIGRFGRPHGIKGFVTVHSFTDPADNILRYNDWHVFLNKQWQPLKLLTIEVRSKAIIAQIEGYPERELVSALTNLDIGVQESQLAALAPGEYYWYQLIGMSVINSKGDLFGKVVEIMPTGSNDVLVVEGEKRHLIPYLPGQFVINIDESQQVITVDWDMNF</sequence>
<comment type="function">
    <text evidence="1">An accessory protein needed during the final step in the assembly of 30S ribosomal subunit, possibly for assembly of the head region. Essential for efficient processing of 16S rRNA. May be needed both before and after RbfA during the maturation of 16S rRNA. It has affinity for free ribosomal 30S subunits but not for 70S ribosomes.</text>
</comment>
<comment type="subunit">
    <text evidence="1">Binds ribosomal protein uS19.</text>
</comment>
<comment type="subcellular location">
    <subcellularLocation>
        <location evidence="1">Cytoplasm</location>
    </subcellularLocation>
</comment>
<comment type="domain">
    <text evidence="1">The PRC barrel domain binds ribosomal protein uS19.</text>
</comment>
<comment type="similarity">
    <text evidence="1">Belongs to the RimM family.</text>
</comment>
<feature type="chain" id="PRO_0000163306" description="Ribosome maturation factor RimM">
    <location>
        <begin position="1"/>
        <end position="169"/>
    </location>
</feature>
<feature type="domain" description="PRC barrel" evidence="1">
    <location>
        <begin position="97"/>
        <end position="169"/>
    </location>
</feature>
<dbReference type="EMBL" id="CR628336">
    <property type="protein sequence ID" value="CAH11613.1"/>
    <property type="molecule type" value="Genomic_DNA"/>
</dbReference>
<dbReference type="RefSeq" id="WP_011213051.1">
    <property type="nucleotide sequence ID" value="NC_006368.1"/>
</dbReference>
<dbReference type="SMR" id="Q5X7Z0"/>
<dbReference type="KEGG" id="lpp:lpp0465"/>
<dbReference type="LegioList" id="lpp0465"/>
<dbReference type="HOGENOM" id="CLU_077636_1_0_6"/>
<dbReference type="GO" id="GO:0005737">
    <property type="term" value="C:cytoplasm"/>
    <property type="evidence" value="ECO:0007669"/>
    <property type="project" value="UniProtKB-SubCell"/>
</dbReference>
<dbReference type="GO" id="GO:0005840">
    <property type="term" value="C:ribosome"/>
    <property type="evidence" value="ECO:0007669"/>
    <property type="project" value="InterPro"/>
</dbReference>
<dbReference type="GO" id="GO:0043022">
    <property type="term" value="F:ribosome binding"/>
    <property type="evidence" value="ECO:0007669"/>
    <property type="project" value="InterPro"/>
</dbReference>
<dbReference type="GO" id="GO:0042274">
    <property type="term" value="P:ribosomal small subunit biogenesis"/>
    <property type="evidence" value="ECO:0007669"/>
    <property type="project" value="UniProtKB-UniRule"/>
</dbReference>
<dbReference type="GO" id="GO:0006364">
    <property type="term" value="P:rRNA processing"/>
    <property type="evidence" value="ECO:0007669"/>
    <property type="project" value="UniProtKB-UniRule"/>
</dbReference>
<dbReference type="Gene3D" id="2.30.30.240">
    <property type="entry name" value="PRC-barrel domain"/>
    <property type="match status" value="1"/>
</dbReference>
<dbReference type="Gene3D" id="2.40.30.60">
    <property type="entry name" value="RimM"/>
    <property type="match status" value="1"/>
</dbReference>
<dbReference type="HAMAP" id="MF_00014">
    <property type="entry name" value="Ribosome_mat_RimM"/>
    <property type="match status" value="1"/>
</dbReference>
<dbReference type="InterPro" id="IPR011033">
    <property type="entry name" value="PRC_barrel-like_sf"/>
</dbReference>
<dbReference type="InterPro" id="IPR056792">
    <property type="entry name" value="PRC_RimM"/>
</dbReference>
<dbReference type="InterPro" id="IPR011961">
    <property type="entry name" value="RimM"/>
</dbReference>
<dbReference type="InterPro" id="IPR002676">
    <property type="entry name" value="RimM_N"/>
</dbReference>
<dbReference type="InterPro" id="IPR036976">
    <property type="entry name" value="RimM_N_sf"/>
</dbReference>
<dbReference type="InterPro" id="IPR009000">
    <property type="entry name" value="Transl_B-barrel_sf"/>
</dbReference>
<dbReference type="NCBIfam" id="TIGR02273">
    <property type="entry name" value="16S_RimM"/>
    <property type="match status" value="1"/>
</dbReference>
<dbReference type="PANTHER" id="PTHR33692">
    <property type="entry name" value="RIBOSOME MATURATION FACTOR RIMM"/>
    <property type="match status" value="1"/>
</dbReference>
<dbReference type="PANTHER" id="PTHR33692:SF1">
    <property type="entry name" value="RIBOSOME MATURATION FACTOR RIMM"/>
    <property type="match status" value="1"/>
</dbReference>
<dbReference type="Pfam" id="PF24986">
    <property type="entry name" value="PRC_RimM"/>
    <property type="match status" value="1"/>
</dbReference>
<dbReference type="Pfam" id="PF01782">
    <property type="entry name" value="RimM"/>
    <property type="match status" value="1"/>
</dbReference>
<dbReference type="SUPFAM" id="SSF50346">
    <property type="entry name" value="PRC-barrel domain"/>
    <property type="match status" value="1"/>
</dbReference>
<dbReference type="SUPFAM" id="SSF50447">
    <property type="entry name" value="Translation proteins"/>
    <property type="match status" value="1"/>
</dbReference>
<organism>
    <name type="scientific">Legionella pneumophila (strain Paris)</name>
    <dbReference type="NCBI Taxonomy" id="297246"/>
    <lineage>
        <taxon>Bacteria</taxon>
        <taxon>Pseudomonadati</taxon>
        <taxon>Pseudomonadota</taxon>
        <taxon>Gammaproteobacteria</taxon>
        <taxon>Legionellales</taxon>
        <taxon>Legionellaceae</taxon>
        <taxon>Legionella</taxon>
    </lineage>
</organism>
<accession>Q5X7Z0</accession>
<name>RIMM_LEGPA</name>
<keyword id="KW-0143">Chaperone</keyword>
<keyword id="KW-0963">Cytoplasm</keyword>
<keyword id="KW-0690">Ribosome biogenesis</keyword>
<keyword id="KW-0698">rRNA processing</keyword>
<proteinExistence type="inferred from homology"/>
<gene>
    <name evidence="1" type="primary">rimM</name>
    <name type="ordered locus">lpp0465</name>
</gene>
<reference key="1">
    <citation type="journal article" date="2004" name="Nat. Genet.">
        <title>Evidence in the Legionella pneumophila genome for exploitation of host cell functions and high genome plasticity.</title>
        <authorList>
            <person name="Cazalet C."/>
            <person name="Rusniok C."/>
            <person name="Brueggemann H."/>
            <person name="Zidane N."/>
            <person name="Magnier A."/>
            <person name="Ma L."/>
            <person name="Tichit M."/>
            <person name="Jarraud S."/>
            <person name="Bouchier C."/>
            <person name="Vandenesch F."/>
            <person name="Kunst F."/>
            <person name="Etienne J."/>
            <person name="Glaser P."/>
            <person name="Buchrieser C."/>
        </authorList>
    </citation>
    <scope>NUCLEOTIDE SEQUENCE [LARGE SCALE GENOMIC DNA]</scope>
    <source>
        <strain>Paris</strain>
    </source>
</reference>
<evidence type="ECO:0000255" key="1">
    <source>
        <dbReference type="HAMAP-Rule" id="MF_00014"/>
    </source>
</evidence>